<evidence type="ECO:0000255" key="1">
    <source>
        <dbReference type="HAMAP-Rule" id="MF_00102"/>
    </source>
</evidence>
<evidence type="ECO:0000305" key="2"/>
<sequence>MAKVVICGASGRMGQTLGRMVAESQDLELAGGIDLHPGSFFGAEIVAAKEIEALLASKKPDVLIDFTVAHAAVENVKSAARNNVALIVGTTGFTPEQREVMATAINGHVPAVISSNYSVGVNIFWQLVREAGRLLKDYDIEVIEAHHRNKKDAPSGTAKTILQILDEEAGERRKLYGREGMMERQNEIGVHVIRGGDIVGDHTVMFSKNFETIELSHRAYDRSVFASGALRAARWVVGKKPGIYGMNDVLGLEKT</sequence>
<organism>
    <name type="scientific">Methanoregula boonei (strain DSM 21154 / JCM 14090 / 6A8)</name>
    <dbReference type="NCBI Taxonomy" id="456442"/>
    <lineage>
        <taxon>Archaea</taxon>
        <taxon>Methanobacteriati</taxon>
        <taxon>Methanobacteriota</taxon>
        <taxon>Stenosarchaea group</taxon>
        <taxon>Methanomicrobia</taxon>
        <taxon>Methanomicrobiales</taxon>
        <taxon>Methanoregulaceae</taxon>
        <taxon>Methanoregula</taxon>
    </lineage>
</organism>
<proteinExistence type="inferred from homology"/>
<feature type="chain" id="PRO_1000008585" description="4-hydroxy-tetrahydrodipicolinate reductase">
    <location>
        <begin position="1"/>
        <end position="255"/>
    </location>
</feature>
<feature type="active site" description="Proton donor/acceptor" evidence="1">
    <location>
        <position position="146"/>
    </location>
</feature>
<feature type="active site" description="Proton donor" evidence="1">
    <location>
        <position position="150"/>
    </location>
</feature>
<feature type="binding site" evidence="1">
    <location>
        <begin position="8"/>
        <end position="13"/>
    </location>
    <ligand>
        <name>NAD(+)</name>
        <dbReference type="ChEBI" id="CHEBI:57540"/>
    </ligand>
</feature>
<feature type="binding site" evidence="1">
    <location>
        <begin position="89"/>
        <end position="91"/>
    </location>
    <ligand>
        <name>NAD(+)</name>
        <dbReference type="ChEBI" id="CHEBI:57540"/>
    </ligand>
</feature>
<feature type="binding site" evidence="1">
    <location>
        <begin position="114"/>
        <end position="117"/>
    </location>
    <ligand>
        <name>NAD(+)</name>
        <dbReference type="ChEBI" id="CHEBI:57540"/>
    </ligand>
</feature>
<feature type="binding site" evidence="1">
    <location>
        <position position="147"/>
    </location>
    <ligand>
        <name>(S)-2,3,4,5-tetrahydrodipicolinate</name>
        <dbReference type="ChEBI" id="CHEBI:16845"/>
    </ligand>
</feature>
<feature type="binding site" evidence="1">
    <location>
        <begin position="156"/>
        <end position="157"/>
    </location>
    <ligand>
        <name>(S)-2,3,4,5-tetrahydrodipicolinate</name>
        <dbReference type="ChEBI" id="CHEBI:16845"/>
    </ligand>
</feature>
<accession>A7I854</accession>
<gene>
    <name evidence="1" type="primary">dapB</name>
    <name type="ordered locus">Mboo_1397</name>
</gene>
<reference key="1">
    <citation type="journal article" date="2015" name="Microbiology">
        <title>Genome of Methanoregula boonei 6A8 reveals adaptations to oligotrophic peatland environments.</title>
        <authorList>
            <person name="Braeuer S."/>
            <person name="Cadillo-Quiroz H."/>
            <person name="Kyrpides N."/>
            <person name="Woyke T."/>
            <person name="Goodwin L."/>
            <person name="Detter C."/>
            <person name="Podell S."/>
            <person name="Yavitt J.B."/>
            <person name="Zinder S.H."/>
        </authorList>
    </citation>
    <scope>NUCLEOTIDE SEQUENCE [LARGE SCALE GENOMIC DNA]</scope>
    <source>
        <strain>DSM 21154 / JCM 14090 / 6A8</strain>
    </source>
</reference>
<keyword id="KW-0028">Amino-acid biosynthesis</keyword>
<keyword id="KW-0963">Cytoplasm</keyword>
<keyword id="KW-0220">Diaminopimelate biosynthesis</keyword>
<keyword id="KW-0457">Lysine biosynthesis</keyword>
<keyword id="KW-0520">NAD</keyword>
<keyword id="KW-0521">NADP</keyword>
<keyword id="KW-0560">Oxidoreductase</keyword>
<keyword id="KW-1185">Reference proteome</keyword>
<dbReference type="EC" id="1.17.1.8" evidence="1"/>
<dbReference type="EMBL" id="CP000780">
    <property type="protein sequence ID" value="ABS55915.1"/>
    <property type="molecule type" value="Genomic_DNA"/>
</dbReference>
<dbReference type="RefSeq" id="WP_012106948.1">
    <property type="nucleotide sequence ID" value="NC_009712.1"/>
</dbReference>
<dbReference type="SMR" id="A7I854"/>
<dbReference type="STRING" id="456442.Mboo_1397"/>
<dbReference type="GeneID" id="5410959"/>
<dbReference type="KEGG" id="mbn:Mboo_1397"/>
<dbReference type="eggNOG" id="arCOG04393">
    <property type="taxonomic scope" value="Archaea"/>
</dbReference>
<dbReference type="HOGENOM" id="CLU_047479_2_1_2"/>
<dbReference type="OrthoDB" id="195035at2157"/>
<dbReference type="UniPathway" id="UPA00034">
    <property type="reaction ID" value="UER00018"/>
</dbReference>
<dbReference type="Proteomes" id="UP000002408">
    <property type="component" value="Chromosome"/>
</dbReference>
<dbReference type="GO" id="GO:0005737">
    <property type="term" value="C:cytoplasm"/>
    <property type="evidence" value="ECO:0007669"/>
    <property type="project" value="UniProtKB-SubCell"/>
</dbReference>
<dbReference type="GO" id="GO:0008839">
    <property type="term" value="F:4-hydroxy-tetrahydrodipicolinate reductase"/>
    <property type="evidence" value="ECO:0007669"/>
    <property type="project" value="UniProtKB-EC"/>
</dbReference>
<dbReference type="GO" id="GO:0051287">
    <property type="term" value="F:NAD binding"/>
    <property type="evidence" value="ECO:0007669"/>
    <property type="project" value="UniProtKB-UniRule"/>
</dbReference>
<dbReference type="GO" id="GO:0050661">
    <property type="term" value="F:NADP binding"/>
    <property type="evidence" value="ECO:0007669"/>
    <property type="project" value="UniProtKB-UniRule"/>
</dbReference>
<dbReference type="GO" id="GO:0016726">
    <property type="term" value="F:oxidoreductase activity, acting on CH or CH2 groups, NAD or NADP as acceptor"/>
    <property type="evidence" value="ECO:0007669"/>
    <property type="project" value="UniProtKB-UniRule"/>
</dbReference>
<dbReference type="GO" id="GO:0019877">
    <property type="term" value="P:diaminopimelate biosynthetic process"/>
    <property type="evidence" value="ECO:0007669"/>
    <property type="project" value="UniProtKB-UniRule"/>
</dbReference>
<dbReference type="GO" id="GO:0009089">
    <property type="term" value="P:lysine biosynthetic process via diaminopimelate"/>
    <property type="evidence" value="ECO:0007669"/>
    <property type="project" value="UniProtKB-UniRule"/>
</dbReference>
<dbReference type="CDD" id="cd02274">
    <property type="entry name" value="DHDPR_N"/>
    <property type="match status" value="1"/>
</dbReference>
<dbReference type="Gene3D" id="3.30.360.10">
    <property type="entry name" value="Dihydrodipicolinate Reductase, domain 2"/>
    <property type="match status" value="1"/>
</dbReference>
<dbReference type="Gene3D" id="3.40.50.720">
    <property type="entry name" value="NAD(P)-binding Rossmann-like Domain"/>
    <property type="match status" value="1"/>
</dbReference>
<dbReference type="HAMAP" id="MF_00102">
    <property type="entry name" value="DapB"/>
    <property type="match status" value="1"/>
</dbReference>
<dbReference type="InterPro" id="IPR022663">
    <property type="entry name" value="DapB_C"/>
</dbReference>
<dbReference type="InterPro" id="IPR000846">
    <property type="entry name" value="DapB_N"/>
</dbReference>
<dbReference type="InterPro" id="IPR022664">
    <property type="entry name" value="DapB_N_CS"/>
</dbReference>
<dbReference type="InterPro" id="IPR023940">
    <property type="entry name" value="DHDPR_bac"/>
</dbReference>
<dbReference type="InterPro" id="IPR036291">
    <property type="entry name" value="NAD(P)-bd_dom_sf"/>
</dbReference>
<dbReference type="NCBIfam" id="TIGR00036">
    <property type="entry name" value="dapB"/>
    <property type="match status" value="1"/>
</dbReference>
<dbReference type="PANTHER" id="PTHR20836:SF0">
    <property type="entry name" value="4-HYDROXY-TETRAHYDRODIPICOLINATE REDUCTASE 1, CHLOROPLASTIC-RELATED"/>
    <property type="match status" value="1"/>
</dbReference>
<dbReference type="PANTHER" id="PTHR20836">
    <property type="entry name" value="DIHYDRODIPICOLINATE REDUCTASE"/>
    <property type="match status" value="1"/>
</dbReference>
<dbReference type="Pfam" id="PF05173">
    <property type="entry name" value="DapB_C"/>
    <property type="match status" value="1"/>
</dbReference>
<dbReference type="Pfam" id="PF01113">
    <property type="entry name" value="DapB_N"/>
    <property type="match status" value="1"/>
</dbReference>
<dbReference type="PIRSF" id="PIRSF000161">
    <property type="entry name" value="DHPR"/>
    <property type="match status" value="1"/>
</dbReference>
<dbReference type="SUPFAM" id="SSF55347">
    <property type="entry name" value="Glyceraldehyde-3-phosphate dehydrogenase-like, C-terminal domain"/>
    <property type="match status" value="1"/>
</dbReference>
<dbReference type="SUPFAM" id="SSF51735">
    <property type="entry name" value="NAD(P)-binding Rossmann-fold domains"/>
    <property type="match status" value="1"/>
</dbReference>
<dbReference type="PROSITE" id="PS01298">
    <property type="entry name" value="DAPB"/>
    <property type="match status" value="1"/>
</dbReference>
<name>DAPB_METB6</name>
<comment type="function">
    <text evidence="1">Catalyzes the conversion of 4-hydroxy-tetrahydrodipicolinate (HTPA) to tetrahydrodipicolinate.</text>
</comment>
<comment type="catalytic activity">
    <reaction evidence="1">
        <text>(S)-2,3,4,5-tetrahydrodipicolinate + NAD(+) + H2O = (2S,4S)-4-hydroxy-2,3,4,5-tetrahydrodipicolinate + NADH + H(+)</text>
        <dbReference type="Rhea" id="RHEA:35323"/>
        <dbReference type="ChEBI" id="CHEBI:15377"/>
        <dbReference type="ChEBI" id="CHEBI:15378"/>
        <dbReference type="ChEBI" id="CHEBI:16845"/>
        <dbReference type="ChEBI" id="CHEBI:57540"/>
        <dbReference type="ChEBI" id="CHEBI:57945"/>
        <dbReference type="ChEBI" id="CHEBI:67139"/>
        <dbReference type="EC" id="1.17.1.8"/>
    </reaction>
</comment>
<comment type="catalytic activity">
    <reaction evidence="1">
        <text>(S)-2,3,4,5-tetrahydrodipicolinate + NADP(+) + H2O = (2S,4S)-4-hydroxy-2,3,4,5-tetrahydrodipicolinate + NADPH + H(+)</text>
        <dbReference type="Rhea" id="RHEA:35331"/>
        <dbReference type="ChEBI" id="CHEBI:15377"/>
        <dbReference type="ChEBI" id="CHEBI:15378"/>
        <dbReference type="ChEBI" id="CHEBI:16845"/>
        <dbReference type="ChEBI" id="CHEBI:57783"/>
        <dbReference type="ChEBI" id="CHEBI:58349"/>
        <dbReference type="ChEBI" id="CHEBI:67139"/>
        <dbReference type="EC" id="1.17.1.8"/>
    </reaction>
</comment>
<comment type="pathway">
    <text evidence="1">Amino-acid biosynthesis; L-lysine biosynthesis via DAP pathway; (S)-tetrahydrodipicolinate from L-aspartate: step 4/4.</text>
</comment>
<comment type="subcellular location">
    <subcellularLocation>
        <location evidence="1">Cytoplasm</location>
    </subcellularLocation>
</comment>
<comment type="similarity">
    <text evidence="1">Belongs to the DapB family.</text>
</comment>
<comment type="caution">
    <text evidence="2">Was originally thought to be a dihydrodipicolinate reductase (DHDPR), catalyzing the conversion of dihydrodipicolinate to tetrahydrodipicolinate. However, it was shown in E.coli that the substrate of the enzymatic reaction is not dihydrodipicolinate (DHDP) but in fact (2S,4S)-4-hydroxy-2,3,4,5-tetrahydrodipicolinic acid (HTPA), the product released by the DapA-catalyzed reaction.</text>
</comment>
<protein>
    <recommendedName>
        <fullName evidence="1">4-hydroxy-tetrahydrodipicolinate reductase</fullName>
        <shortName evidence="1">HTPA reductase</shortName>
        <ecNumber evidence="1">1.17.1.8</ecNumber>
    </recommendedName>
</protein>